<comment type="function">
    <text evidence="1">Required in the presynaptic motoneuron to down-regulate the levels of wnd and restrain synaptic terminal growth at the neuromuscular junction (NMJ).</text>
</comment>
<comment type="pathway">
    <text evidence="2">Protein modification; protein ubiquitination.</text>
</comment>
<comment type="subunit">
    <text evidence="2">Component of an E3 ubiquitin ligase complex composed of hiw and Fsn.</text>
</comment>
<comment type="subcellular location">
    <subcellularLocation>
        <location evidence="2">Synapse</location>
    </subcellularLocation>
</comment>
<comment type="similarity">
    <text evidence="5">Belongs to the FBXO45/Fsn family.</text>
</comment>
<proteinExistence type="inferred from homology"/>
<gene>
    <name evidence="2" type="primary">Fsn</name>
    <name type="ORF">GK22006</name>
</gene>
<evidence type="ECO:0000250" key="1"/>
<evidence type="ECO:0000250" key="2">
    <source>
        <dbReference type="UniProtKB" id="Q9V6L9"/>
    </source>
</evidence>
<evidence type="ECO:0000255" key="3"/>
<evidence type="ECO:0000255" key="4">
    <source>
        <dbReference type="PROSITE-ProRule" id="PRU00548"/>
    </source>
</evidence>
<evidence type="ECO:0000305" key="5"/>
<evidence type="ECO:0000312" key="6">
    <source>
        <dbReference type="EMBL" id="EDW74598.1"/>
    </source>
</evidence>
<reference evidence="6" key="1">
    <citation type="journal article" date="2007" name="Nature">
        <title>Evolution of genes and genomes on the Drosophila phylogeny.</title>
        <authorList>
            <consortium name="Drosophila 12 genomes consortium"/>
        </authorList>
    </citation>
    <scope>NUCLEOTIDE SEQUENCE [LARGE SCALE GENOMIC DNA]</scope>
    <source>
        <strain evidence="6">Tucson 14030-0811.24</strain>
    </source>
</reference>
<name>FBSP1_DROWI</name>
<keyword id="KW-0524">Neurogenesis</keyword>
<keyword id="KW-1185">Reference proteome</keyword>
<keyword id="KW-0770">Synapse</keyword>
<keyword id="KW-0833">Ubl conjugation pathway</keyword>
<protein>
    <recommendedName>
        <fullName evidence="2">F-box/SPRY domain-containing protein 1</fullName>
    </recommendedName>
</protein>
<dbReference type="EMBL" id="CH963849">
    <property type="protein sequence ID" value="EDW74598.1"/>
    <property type="molecule type" value="Genomic_DNA"/>
</dbReference>
<dbReference type="SMR" id="B4MR59"/>
<dbReference type="STRING" id="7260.B4MR59"/>
<dbReference type="EnsemblMetazoa" id="FBtr0252657">
    <property type="protein sequence ID" value="FBpp0251149"/>
    <property type="gene ID" value="FBgn0223991"/>
</dbReference>
<dbReference type="EnsemblMetazoa" id="XM_002063576.4">
    <property type="protein sequence ID" value="XP_002063612.1"/>
    <property type="gene ID" value="LOC6640642"/>
</dbReference>
<dbReference type="GeneID" id="6640642"/>
<dbReference type="KEGG" id="dwi:6640642"/>
<dbReference type="CTD" id="36460"/>
<dbReference type="eggNOG" id="KOG3953">
    <property type="taxonomic scope" value="Eukaryota"/>
</dbReference>
<dbReference type="HOGENOM" id="CLU_046756_1_0_1"/>
<dbReference type="OMA" id="ATKRASM"/>
<dbReference type="OrthoDB" id="2398163at2759"/>
<dbReference type="PhylomeDB" id="B4MR59"/>
<dbReference type="UniPathway" id="UPA00143"/>
<dbReference type="Proteomes" id="UP000007798">
    <property type="component" value="Unassembled WGS sequence"/>
</dbReference>
<dbReference type="GO" id="GO:0031594">
    <property type="term" value="C:neuromuscular junction"/>
    <property type="evidence" value="ECO:0000250"/>
    <property type="project" value="UniProtKB"/>
</dbReference>
<dbReference type="GO" id="GO:0019005">
    <property type="term" value="C:SCF ubiquitin ligase complex"/>
    <property type="evidence" value="ECO:0007669"/>
    <property type="project" value="TreeGrafter"/>
</dbReference>
<dbReference type="GO" id="GO:0045886">
    <property type="term" value="P:negative regulation of synaptic assembly at neuromuscular junction"/>
    <property type="evidence" value="ECO:0000250"/>
    <property type="project" value="UniProtKB"/>
</dbReference>
<dbReference type="GO" id="GO:0007274">
    <property type="term" value="P:neuromuscular synaptic transmission"/>
    <property type="evidence" value="ECO:0000250"/>
    <property type="project" value="UniProtKB"/>
</dbReference>
<dbReference type="GO" id="GO:0043161">
    <property type="term" value="P:proteasome-mediated ubiquitin-dependent protein catabolic process"/>
    <property type="evidence" value="ECO:0007669"/>
    <property type="project" value="TreeGrafter"/>
</dbReference>
<dbReference type="GO" id="GO:0016567">
    <property type="term" value="P:protein ubiquitination"/>
    <property type="evidence" value="ECO:0007669"/>
    <property type="project" value="UniProtKB-UniPathway"/>
</dbReference>
<dbReference type="GO" id="GO:0060386">
    <property type="term" value="P:synapse assembly involved in innervation"/>
    <property type="evidence" value="ECO:0007669"/>
    <property type="project" value="TreeGrafter"/>
</dbReference>
<dbReference type="CDD" id="cd22111">
    <property type="entry name" value="F-box_FBXO45"/>
    <property type="match status" value="1"/>
</dbReference>
<dbReference type="CDD" id="cd12907">
    <property type="entry name" value="SPRY_Fbox"/>
    <property type="match status" value="1"/>
</dbReference>
<dbReference type="FunFam" id="1.20.1280.50:FF:000140">
    <property type="entry name" value="F-box/SPRY domain-containing protein 1"/>
    <property type="match status" value="1"/>
</dbReference>
<dbReference type="FunFam" id="2.60.120.920:FF:000017">
    <property type="entry name" value="F-box/SPRY domain-containing protein 1"/>
    <property type="match status" value="1"/>
</dbReference>
<dbReference type="Gene3D" id="1.20.1280.50">
    <property type="match status" value="1"/>
</dbReference>
<dbReference type="Gene3D" id="2.60.120.920">
    <property type="match status" value="1"/>
</dbReference>
<dbReference type="InterPro" id="IPR001870">
    <property type="entry name" value="B30.2/SPRY"/>
</dbReference>
<dbReference type="InterPro" id="IPR043136">
    <property type="entry name" value="B30.2/SPRY_sf"/>
</dbReference>
<dbReference type="InterPro" id="IPR013320">
    <property type="entry name" value="ConA-like_dom_sf"/>
</dbReference>
<dbReference type="InterPro" id="IPR036047">
    <property type="entry name" value="F-box-like_dom_sf"/>
</dbReference>
<dbReference type="InterPro" id="IPR001810">
    <property type="entry name" value="F-box_dom"/>
</dbReference>
<dbReference type="InterPro" id="IPR050672">
    <property type="entry name" value="FBXO45-Fsn/SPSB_families"/>
</dbReference>
<dbReference type="InterPro" id="IPR003877">
    <property type="entry name" value="SPRY_dom"/>
</dbReference>
<dbReference type="InterPro" id="IPR035784">
    <property type="entry name" value="SPRY_FBXO45"/>
</dbReference>
<dbReference type="PANTHER" id="PTHR12245:SF7">
    <property type="entry name" value="F-BOX_SPRY DOMAIN-CONTAINING PROTEIN 1"/>
    <property type="match status" value="1"/>
</dbReference>
<dbReference type="PANTHER" id="PTHR12245">
    <property type="entry name" value="SPRY DOMAIN CONTAINING SOCS BOX PROTEIN"/>
    <property type="match status" value="1"/>
</dbReference>
<dbReference type="Pfam" id="PF12937">
    <property type="entry name" value="F-box-like"/>
    <property type="match status" value="1"/>
</dbReference>
<dbReference type="Pfam" id="PF00622">
    <property type="entry name" value="SPRY"/>
    <property type="match status" value="1"/>
</dbReference>
<dbReference type="SMART" id="SM00449">
    <property type="entry name" value="SPRY"/>
    <property type="match status" value="1"/>
</dbReference>
<dbReference type="SUPFAM" id="SSF49899">
    <property type="entry name" value="Concanavalin A-like lectins/glucanases"/>
    <property type="match status" value="1"/>
</dbReference>
<dbReference type="SUPFAM" id="SSF81383">
    <property type="entry name" value="F-box domain"/>
    <property type="match status" value="1"/>
</dbReference>
<dbReference type="PROSITE" id="PS50188">
    <property type="entry name" value="B302_SPRY"/>
    <property type="match status" value="1"/>
</dbReference>
<organism>
    <name type="scientific">Drosophila willistoni</name>
    <name type="common">Fruit fly</name>
    <dbReference type="NCBI Taxonomy" id="7260"/>
    <lineage>
        <taxon>Eukaryota</taxon>
        <taxon>Metazoa</taxon>
        <taxon>Ecdysozoa</taxon>
        <taxon>Arthropoda</taxon>
        <taxon>Hexapoda</taxon>
        <taxon>Insecta</taxon>
        <taxon>Pterygota</taxon>
        <taxon>Neoptera</taxon>
        <taxon>Endopterygota</taxon>
        <taxon>Diptera</taxon>
        <taxon>Brachycera</taxon>
        <taxon>Muscomorpha</taxon>
        <taxon>Ephydroidea</taxon>
        <taxon>Drosophilidae</taxon>
        <taxon>Drosophila</taxon>
        <taxon>Sophophora</taxon>
    </lineage>
</organism>
<sequence length="255" mass="28806">MVDPVAALCNFNVLEVIFSYLDLNDLSRCSQVCRSWHHFLNDENSDVWRWHCLHKLPKEAMKSDLLTSVSTYKTKLRAYFHAWSPNDCSRNVYIKPNGFTLHRNPVAQSTDAARAKIGFRHGRHAWEVIWEGPLGTVAVIGISTKDAALQCHGYVALLGSDDQSWGWNLVENHLLHNGDMQGSYPLLSNAPKYQVGERIRVILDCDDNTLSFEKNYEFLGVAFRGLPDKKLYPTVSAVYGNTEVSMVYLGTPLDG</sequence>
<feature type="chain" id="PRO_0000383319" description="F-box/SPRY domain-containing protein 1">
    <location>
        <begin position="1"/>
        <end position="255"/>
    </location>
</feature>
<feature type="domain" description="F-box" evidence="3">
    <location>
        <begin position="3"/>
        <end position="51"/>
    </location>
</feature>
<feature type="domain" description="B30.2/SPRY" evidence="4">
    <location>
        <begin position="61"/>
        <end position="253"/>
    </location>
</feature>
<accession>B4MR59</accession>